<sequence length="247" mass="27314">MSGHNKWSTIKHKKGAADAKRGKIFTKLIKEITVAAKLGGGDPEGNPRLRTAIDKAKGENMPKDNIERAIKKGTGGMDGVVYEETTYEGYGPGGAAVLVEVMTDNRNRTVSDVRSIFTKCNGNMGESGCVSWMFDKKGLMVFPKSVDFDKLFEAAIEAGAEDVSDEEEQIEVTTDPVSFMEVRDTLEKAGFKPESAEVTMIPQTMVKLEGKQAENMLKLMDRMEDNDDVQNVYANFDISEEEMDKMM</sequence>
<evidence type="ECO:0000255" key="1">
    <source>
        <dbReference type="HAMAP-Rule" id="MF_00693"/>
    </source>
</evidence>
<keyword id="KW-0963">Cytoplasm</keyword>
<keyword id="KW-0238">DNA-binding</keyword>
<keyword id="KW-1185">Reference proteome</keyword>
<keyword id="KW-0804">Transcription</keyword>
<keyword id="KW-0805">Transcription regulation</keyword>
<protein>
    <recommendedName>
        <fullName evidence="1">Probable transcriptional regulatory protein Gura_1416</fullName>
    </recommendedName>
</protein>
<dbReference type="EMBL" id="CP000698">
    <property type="protein sequence ID" value="ABQ25617.1"/>
    <property type="molecule type" value="Genomic_DNA"/>
</dbReference>
<dbReference type="RefSeq" id="WP_011938333.1">
    <property type="nucleotide sequence ID" value="NC_009483.1"/>
</dbReference>
<dbReference type="SMR" id="A5G9Y5"/>
<dbReference type="STRING" id="351605.Gura_1416"/>
<dbReference type="KEGG" id="gur:Gura_1416"/>
<dbReference type="HOGENOM" id="CLU_062974_2_2_7"/>
<dbReference type="OrthoDB" id="9781053at2"/>
<dbReference type="Proteomes" id="UP000006695">
    <property type="component" value="Chromosome"/>
</dbReference>
<dbReference type="GO" id="GO:0005829">
    <property type="term" value="C:cytosol"/>
    <property type="evidence" value="ECO:0007669"/>
    <property type="project" value="TreeGrafter"/>
</dbReference>
<dbReference type="GO" id="GO:0003677">
    <property type="term" value="F:DNA binding"/>
    <property type="evidence" value="ECO:0007669"/>
    <property type="project" value="UniProtKB-UniRule"/>
</dbReference>
<dbReference type="GO" id="GO:0006355">
    <property type="term" value="P:regulation of DNA-templated transcription"/>
    <property type="evidence" value="ECO:0007669"/>
    <property type="project" value="UniProtKB-UniRule"/>
</dbReference>
<dbReference type="FunFam" id="1.10.10.200:FF:000001">
    <property type="entry name" value="Probable transcriptional regulatory protein YebC"/>
    <property type="match status" value="1"/>
</dbReference>
<dbReference type="FunFam" id="3.30.70.980:FF:000002">
    <property type="entry name" value="Probable transcriptional regulatory protein YebC"/>
    <property type="match status" value="1"/>
</dbReference>
<dbReference type="Gene3D" id="1.10.10.200">
    <property type="match status" value="1"/>
</dbReference>
<dbReference type="Gene3D" id="3.30.70.980">
    <property type="match status" value="2"/>
</dbReference>
<dbReference type="HAMAP" id="MF_00693">
    <property type="entry name" value="Transcrip_reg_TACO1"/>
    <property type="match status" value="1"/>
</dbReference>
<dbReference type="InterPro" id="IPR017856">
    <property type="entry name" value="Integrase-like_N"/>
</dbReference>
<dbReference type="InterPro" id="IPR048300">
    <property type="entry name" value="TACO1_YebC-like_2nd/3rd_dom"/>
</dbReference>
<dbReference type="InterPro" id="IPR049083">
    <property type="entry name" value="TACO1_YebC_N"/>
</dbReference>
<dbReference type="InterPro" id="IPR002876">
    <property type="entry name" value="Transcrip_reg_TACO1-like"/>
</dbReference>
<dbReference type="InterPro" id="IPR026564">
    <property type="entry name" value="Transcrip_reg_TACO1-like_dom3"/>
</dbReference>
<dbReference type="InterPro" id="IPR029072">
    <property type="entry name" value="YebC-like"/>
</dbReference>
<dbReference type="NCBIfam" id="NF001030">
    <property type="entry name" value="PRK00110.1"/>
    <property type="match status" value="1"/>
</dbReference>
<dbReference type="NCBIfam" id="NF009044">
    <property type="entry name" value="PRK12378.1"/>
    <property type="match status" value="1"/>
</dbReference>
<dbReference type="NCBIfam" id="TIGR01033">
    <property type="entry name" value="YebC/PmpR family DNA-binding transcriptional regulator"/>
    <property type="match status" value="1"/>
</dbReference>
<dbReference type="PANTHER" id="PTHR12532:SF6">
    <property type="entry name" value="TRANSCRIPTIONAL REGULATORY PROTEIN YEBC-RELATED"/>
    <property type="match status" value="1"/>
</dbReference>
<dbReference type="PANTHER" id="PTHR12532">
    <property type="entry name" value="TRANSLATIONAL ACTIVATOR OF CYTOCHROME C OXIDASE 1"/>
    <property type="match status" value="1"/>
</dbReference>
<dbReference type="Pfam" id="PF20772">
    <property type="entry name" value="TACO1_YebC_N"/>
    <property type="match status" value="1"/>
</dbReference>
<dbReference type="Pfam" id="PF01709">
    <property type="entry name" value="Transcrip_reg"/>
    <property type="match status" value="1"/>
</dbReference>
<dbReference type="SUPFAM" id="SSF75625">
    <property type="entry name" value="YebC-like"/>
    <property type="match status" value="1"/>
</dbReference>
<gene>
    <name type="ordered locus">Gura_1416</name>
</gene>
<feature type="chain" id="PRO_1000083158" description="Probable transcriptional regulatory protein Gura_1416">
    <location>
        <begin position="1"/>
        <end position="247"/>
    </location>
</feature>
<comment type="subcellular location">
    <subcellularLocation>
        <location evidence="1">Cytoplasm</location>
    </subcellularLocation>
</comment>
<comment type="similarity">
    <text evidence="1">Belongs to the TACO1 family.</text>
</comment>
<name>Y1416_GEOUR</name>
<proteinExistence type="inferred from homology"/>
<reference key="1">
    <citation type="submission" date="2007-05" db="EMBL/GenBank/DDBJ databases">
        <title>Complete sequence of Geobacter uraniireducens Rf4.</title>
        <authorList>
            <consortium name="US DOE Joint Genome Institute"/>
            <person name="Copeland A."/>
            <person name="Lucas S."/>
            <person name="Lapidus A."/>
            <person name="Barry K."/>
            <person name="Detter J.C."/>
            <person name="Glavina del Rio T."/>
            <person name="Hammon N."/>
            <person name="Israni S."/>
            <person name="Dalin E."/>
            <person name="Tice H."/>
            <person name="Pitluck S."/>
            <person name="Chertkov O."/>
            <person name="Brettin T."/>
            <person name="Bruce D."/>
            <person name="Han C."/>
            <person name="Schmutz J."/>
            <person name="Larimer F."/>
            <person name="Land M."/>
            <person name="Hauser L."/>
            <person name="Kyrpides N."/>
            <person name="Mikhailova N."/>
            <person name="Shelobolina E."/>
            <person name="Aklujkar M."/>
            <person name="Lovley D."/>
            <person name="Richardson P."/>
        </authorList>
    </citation>
    <scope>NUCLEOTIDE SEQUENCE [LARGE SCALE GENOMIC DNA]</scope>
    <source>
        <strain>ATCC BAA-1134 / JCM 13001 / Rf4</strain>
    </source>
</reference>
<accession>A5G9Y5</accession>
<organism>
    <name type="scientific">Geotalea uraniireducens (strain Rf4)</name>
    <name type="common">Geobacter uraniireducens</name>
    <dbReference type="NCBI Taxonomy" id="351605"/>
    <lineage>
        <taxon>Bacteria</taxon>
        <taxon>Pseudomonadati</taxon>
        <taxon>Thermodesulfobacteriota</taxon>
        <taxon>Desulfuromonadia</taxon>
        <taxon>Geobacterales</taxon>
        <taxon>Geobacteraceae</taxon>
        <taxon>Geotalea</taxon>
    </lineage>
</organism>